<organism>
    <name type="scientific">Bartonella tribocorum (strain CIP 105476 / IBS 506)</name>
    <dbReference type="NCBI Taxonomy" id="382640"/>
    <lineage>
        <taxon>Bacteria</taxon>
        <taxon>Pseudomonadati</taxon>
        <taxon>Pseudomonadota</taxon>
        <taxon>Alphaproteobacteria</taxon>
        <taxon>Hyphomicrobiales</taxon>
        <taxon>Bartonellaceae</taxon>
        <taxon>Bartonella</taxon>
    </lineage>
</organism>
<keyword id="KW-0028">Amino-acid biosynthesis</keyword>
<keyword id="KW-0057">Aromatic amino acid biosynthesis</keyword>
<keyword id="KW-0170">Cobalt</keyword>
<keyword id="KW-0963">Cytoplasm</keyword>
<keyword id="KW-0456">Lyase</keyword>
<keyword id="KW-0479">Metal-binding</keyword>
<keyword id="KW-0520">NAD</keyword>
<keyword id="KW-0547">Nucleotide-binding</keyword>
<keyword id="KW-0862">Zinc</keyword>
<gene>
    <name evidence="1" type="primary">aroB</name>
    <name type="ordered locus">BT_2662</name>
</gene>
<protein>
    <recommendedName>
        <fullName evidence="1">3-dehydroquinate synthase</fullName>
        <shortName evidence="1">DHQS</shortName>
        <ecNumber evidence="1">4.2.3.4</ecNumber>
    </recommendedName>
</protein>
<proteinExistence type="inferred from homology"/>
<sequence length="377" mass="41424">MQAKTVTIKLDKHCYDIIIGPDLIAQAALQIKHSLKQKNFHQMRLAIVTDTNVASLHLDALQAELTKNKIHTFPIIVKAGEQSKSFSTLQVVIDQILAARLERGDCVIAFGGGVIGDLAGFAASMIRRGMNFIQMPTTLLAQIDSSVGGKTGINSRHGKNLIGAFYQPQCVIADTSVLDTLPPREFRAGYAEMVKYGLINQPDFFEWLEKNGQKIFSNGAIRIEAIVRSCQFKATIVARDEYETGERALLNLGHTFGHMLETATAYDSKRLIHGESVAIGMILAHQFSAQLNLVAPTLINRIETHLKAVGLPTQLKDIPGDLPNAETLMALIAQDKKVSQNNLTFILSRGLGQSFIAKNVPPDLVLSFLEQKLTEIR</sequence>
<evidence type="ECO:0000255" key="1">
    <source>
        <dbReference type="HAMAP-Rule" id="MF_00110"/>
    </source>
</evidence>
<feature type="chain" id="PRO_1000094461" description="3-dehydroquinate synthase">
    <location>
        <begin position="1"/>
        <end position="377"/>
    </location>
</feature>
<feature type="binding site" evidence="1">
    <location>
        <begin position="113"/>
        <end position="117"/>
    </location>
    <ligand>
        <name>NAD(+)</name>
        <dbReference type="ChEBI" id="CHEBI:57540"/>
    </ligand>
</feature>
<feature type="binding site" evidence="1">
    <location>
        <begin position="137"/>
        <end position="138"/>
    </location>
    <ligand>
        <name>NAD(+)</name>
        <dbReference type="ChEBI" id="CHEBI:57540"/>
    </ligand>
</feature>
<feature type="binding site" evidence="1">
    <location>
        <position position="150"/>
    </location>
    <ligand>
        <name>NAD(+)</name>
        <dbReference type="ChEBI" id="CHEBI:57540"/>
    </ligand>
</feature>
<feature type="binding site" evidence="1">
    <location>
        <position position="159"/>
    </location>
    <ligand>
        <name>NAD(+)</name>
        <dbReference type="ChEBI" id="CHEBI:57540"/>
    </ligand>
</feature>
<feature type="binding site" evidence="1">
    <location>
        <position position="192"/>
    </location>
    <ligand>
        <name>Zn(2+)</name>
        <dbReference type="ChEBI" id="CHEBI:29105"/>
    </ligand>
</feature>
<feature type="binding site" evidence="1">
    <location>
        <position position="254"/>
    </location>
    <ligand>
        <name>Zn(2+)</name>
        <dbReference type="ChEBI" id="CHEBI:29105"/>
    </ligand>
</feature>
<feature type="binding site" evidence="1">
    <location>
        <position position="273"/>
    </location>
    <ligand>
        <name>Zn(2+)</name>
        <dbReference type="ChEBI" id="CHEBI:29105"/>
    </ligand>
</feature>
<dbReference type="EC" id="4.2.3.4" evidence="1"/>
<dbReference type="EMBL" id="AM260525">
    <property type="protein sequence ID" value="CAK02609.1"/>
    <property type="molecule type" value="Genomic_DNA"/>
</dbReference>
<dbReference type="RefSeq" id="WP_012232602.1">
    <property type="nucleotide sequence ID" value="NC_010161.1"/>
</dbReference>
<dbReference type="SMR" id="A9IZS4"/>
<dbReference type="KEGG" id="btr:BT_2662"/>
<dbReference type="eggNOG" id="COG0337">
    <property type="taxonomic scope" value="Bacteria"/>
</dbReference>
<dbReference type="HOGENOM" id="CLU_001201_0_2_5"/>
<dbReference type="UniPathway" id="UPA00053">
    <property type="reaction ID" value="UER00085"/>
</dbReference>
<dbReference type="Proteomes" id="UP000001592">
    <property type="component" value="Chromosome"/>
</dbReference>
<dbReference type="GO" id="GO:0005737">
    <property type="term" value="C:cytoplasm"/>
    <property type="evidence" value="ECO:0007669"/>
    <property type="project" value="UniProtKB-SubCell"/>
</dbReference>
<dbReference type="GO" id="GO:0003856">
    <property type="term" value="F:3-dehydroquinate synthase activity"/>
    <property type="evidence" value="ECO:0007669"/>
    <property type="project" value="UniProtKB-UniRule"/>
</dbReference>
<dbReference type="GO" id="GO:0046872">
    <property type="term" value="F:metal ion binding"/>
    <property type="evidence" value="ECO:0007669"/>
    <property type="project" value="UniProtKB-KW"/>
</dbReference>
<dbReference type="GO" id="GO:0000166">
    <property type="term" value="F:nucleotide binding"/>
    <property type="evidence" value="ECO:0007669"/>
    <property type="project" value="UniProtKB-KW"/>
</dbReference>
<dbReference type="GO" id="GO:0008652">
    <property type="term" value="P:amino acid biosynthetic process"/>
    <property type="evidence" value="ECO:0007669"/>
    <property type="project" value="UniProtKB-KW"/>
</dbReference>
<dbReference type="GO" id="GO:0009073">
    <property type="term" value="P:aromatic amino acid family biosynthetic process"/>
    <property type="evidence" value="ECO:0007669"/>
    <property type="project" value="UniProtKB-KW"/>
</dbReference>
<dbReference type="GO" id="GO:0009423">
    <property type="term" value="P:chorismate biosynthetic process"/>
    <property type="evidence" value="ECO:0007669"/>
    <property type="project" value="UniProtKB-UniRule"/>
</dbReference>
<dbReference type="CDD" id="cd08195">
    <property type="entry name" value="DHQS"/>
    <property type="match status" value="1"/>
</dbReference>
<dbReference type="FunFam" id="3.40.50.1970:FF:000001">
    <property type="entry name" value="3-dehydroquinate synthase"/>
    <property type="match status" value="1"/>
</dbReference>
<dbReference type="Gene3D" id="3.40.50.1970">
    <property type="match status" value="1"/>
</dbReference>
<dbReference type="Gene3D" id="1.20.1090.10">
    <property type="entry name" value="Dehydroquinate synthase-like - alpha domain"/>
    <property type="match status" value="1"/>
</dbReference>
<dbReference type="HAMAP" id="MF_00110">
    <property type="entry name" value="DHQ_synthase"/>
    <property type="match status" value="1"/>
</dbReference>
<dbReference type="InterPro" id="IPR050071">
    <property type="entry name" value="Dehydroquinate_synthase"/>
</dbReference>
<dbReference type="InterPro" id="IPR016037">
    <property type="entry name" value="DHQ_synth_AroB"/>
</dbReference>
<dbReference type="InterPro" id="IPR030963">
    <property type="entry name" value="DHQ_synth_fam"/>
</dbReference>
<dbReference type="InterPro" id="IPR030960">
    <property type="entry name" value="DHQS/DOIS_N"/>
</dbReference>
<dbReference type="InterPro" id="IPR056179">
    <property type="entry name" value="DHQS_C"/>
</dbReference>
<dbReference type="NCBIfam" id="TIGR01357">
    <property type="entry name" value="aroB"/>
    <property type="match status" value="1"/>
</dbReference>
<dbReference type="PANTHER" id="PTHR43622">
    <property type="entry name" value="3-DEHYDROQUINATE SYNTHASE"/>
    <property type="match status" value="1"/>
</dbReference>
<dbReference type="PANTHER" id="PTHR43622:SF7">
    <property type="entry name" value="3-DEHYDROQUINATE SYNTHASE, CHLOROPLASTIC"/>
    <property type="match status" value="1"/>
</dbReference>
<dbReference type="Pfam" id="PF01761">
    <property type="entry name" value="DHQ_synthase"/>
    <property type="match status" value="1"/>
</dbReference>
<dbReference type="Pfam" id="PF24621">
    <property type="entry name" value="DHQS_C"/>
    <property type="match status" value="1"/>
</dbReference>
<dbReference type="PIRSF" id="PIRSF001455">
    <property type="entry name" value="DHQ_synth"/>
    <property type="match status" value="1"/>
</dbReference>
<dbReference type="SUPFAM" id="SSF56796">
    <property type="entry name" value="Dehydroquinate synthase-like"/>
    <property type="match status" value="1"/>
</dbReference>
<name>AROB_BART1</name>
<reference key="1">
    <citation type="journal article" date="2007" name="Nat. Genet.">
        <title>Genomic analysis of Bartonella identifies type IV secretion systems as host adaptability factors.</title>
        <authorList>
            <person name="Saenz H.L."/>
            <person name="Engel P."/>
            <person name="Stoeckli M.C."/>
            <person name="Lanz C."/>
            <person name="Raddatz G."/>
            <person name="Vayssier-Taussat M."/>
            <person name="Birtles R."/>
            <person name="Schuster S.C."/>
            <person name="Dehio C."/>
        </authorList>
    </citation>
    <scope>NUCLEOTIDE SEQUENCE [LARGE SCALE GENOMIC DNA]</scope>
    <source>
        <strain>CIP 105476 / IBS 506</strain>
    </source>
</reference>
<comment type="function">
    <text evidence="1">Catalyzes the conversion of 3-deoxy-D-arabino-heptulosonate 7-phosphate (DAHP) to dehydroquinate (DHQ).</text>
</comment>
<comment type="catalytic activity">
    <reaction evidence="1">
        <text>7-phospho-2-dehydro-3-deoxy-D-arabino-heptonate = 3-dehydroquinate + phosphate</text>
        <dbReference type="Rhea" id="RHEA:21968"/>
        <dbReference type="ChEBI" id="CHEBI:32364"/>
        <dbReference type="ChEBI" id="CHEBI:43474"/>
        <dbReference type="ChEBI" id="CHEBI:58394"/>
        <dbReference type="EC" id="4.2.3.4"/>
    </reaction>
</comment>
<comment type="cofactor">
    <cofactor evidence="1">
        <name>Co(2+)</name>
        <dbReference type="ChEBI" id="CHEBI:48828"/>
    </cofactor>
    <cofactor evidence="1">
        <name>Zn(2+)</name>
        <dbReference type="ChEBI" id="CHEBI:29105"/>
    </cofactor>
    <text evidence="1">Binds 1 divalent metal cation per subunit. Can use either Co(2+) or Zn(2+).</text>
</comment>
<comment type="cofactor">
    <cofactor evidence="1">
        <name>NAD(+)</name>
        <dbReference type="ChEBI" id="CHEBI:57540"/>
    </cofactor>
</comment>
<comment type="pathway">
    <text evidence="1">Metabolic intermediate biosynthesis; chorismate biosynthesis; chorismate from D-erythrose 4-phosphate and phosphoenolpyruvate: step 2/7.</text>
</comment>
<comment type="subcellular location">
    <subcellularLocation>
        <location evidence="1">Cytoplasm</location>
    </subcellularLocation>
</comment>
<comment type="similarity">
    <text evidence="1">Belongs to the sugar phosphate cyclases superfamily. Dehydroquinate synthase family.</text>
</comment>
<accession>A9IZS4</accession>